<proteinExistence type="inferred from homology"/>
<evidence type="ECO:0000250" key="1"/>
<evidence type="ECO:0000250" key="2">
    <source>
        <dbReference type="UniProtKB" id="P61024"/>
    </source>
</evidence>
<evidence type="ECO:0000305" key="3"/>
<gene>
    <name type="primary">CKS1B</name>
    <name type="synonym">CKS1</name>
</gene>
<reference key="1">
    <citation type="submission" date="2006-08" db="EMBL/GenBank/DDBJ databases">
        <authorList>
            <consortium name="NIH - Mammalian Gene Collection (MGC) project"/>
        </authorList>
    </citation>
    <scope>NUCLEOTIDE SEQUENCE [LARGE SCALE MRNA]</scope>
    <source>
        <strain>Hereford</strain>
        <tissue>Placenta</tissue>
    </source>
</reference>
<keyword id="KW-0007">Acetylation</keyword>
<keyword id="KW-0131">Cell cycle</keyword>
<keyword id="KW-0132">Cell division</keyword>
<keyword id="KW-1185">Reference proteome</keyword>
<accession>Q0P5A5</accession>
<comment type="function">
    <text evidence="1">Binds to the catalytic subunit of the cyclin dependent kinases and is essential for their biological function.</text>
</comment>
<comment type="subunit">
    <text evidence="1">Forms a homohexamer that can probably bind six kinase subunits.</text>
</comment>
<comment type="similarity">
    <text evidence="3">Belongs to the CKS family.</text>
</comment>
<dbReference type="EMBL" id="BC120301">
    <property type="protein sequence ID" value="AAI20302.1"/>
    <property type="molecule type" value="mRNA"/>
</dbReference>
<dbReference type="RefSeq" id="NP_001106782.1">
    <property type="nucleotide sequence ID" value="NM_001113311.1"/>
</dbReference>
<dbReference type="SMR" id="Q0P5A5"/>
<dbReference type="FunCoup" id="Q0P5A5">
    <property type="interactions" value="2076"/>
</dbReference>
<dbReference type="STRING" id="9913.ENSBTAP00000033878"/>
<dbReference type="PaxDb" id="9913-ENSBTAP00000033878"/>
<dbReference type="Ensembl" id="ENSBTAT00000033975.4">
    <property type="protein sequence ID" value="ENSBTAP00000033878.3"/>
    <property type="gene ID" value="ENSBTAG00000024476.5"/>
</dbReference>
<dbReference type="GeneID" id="615827"/>
<dbReference type="KEGG" id="bta:615827"/>
<dbReference type="CTD" id="1163"/>
<dbReference type="VEuPathDB" id="HostDB:ENSBTAG00000024476"/>
<dbReference type="VGNC" id="VGNC:27387">
    <property type="gene designation" value="CKS1B"/>
</dbReference>
<dbReference type="eggNOG" id="KOG3484">
    <property type="taxonomic scope" value="Eukaryota"/>
</dbReference>
<dbReference type="GeneTree" id="ENSGT00950000182971"/>
<dbReference type="HOGENOM" id="CLU_140546_2_0_1"/>
<dbReference type="InParanoid" id="Q0P5A5"/>
<dbReference type="OMA" id="MSENEWR"/>
<dbReference type="OrthoDB" id="440676at2759"/>
<dbReference type="TreeFam" id="TF101142"/>
<dbReference type="Reactome" id="R-BTA-187577">
    <property type="pathway name" value="SCF(Skp2)-mediated degradation of p27/p21"/>
</dbReference>
<dbReference type="Reactome" id="R-BTA-69231">
    <property type="pathway name" value="Cyclin D associated events in G1"/>
</dbReference>
<dbReference type="Proteomes" id="UP000009136">
    <property type="component" value="Chromosome 3"/>
</dbReference>
<dbReference type="Bgee" id="ENSBTAG00000024476">
    <property type="expression patterns" value="Expressed in oocyte and 109 other cell types or tissues"/>
</dbReference>
<dbReference type="GO" id="GO:0000307">
    <property type="term" value="C:cyclin-dependent protein kinase holoenzyme complex"/>
    <property type="evidence" value="ECO:0000318"/>
    <property type="project" value="GO_Central"/>
</dbReference>
<dbReference type="GO" id="GO:0019005">
    <property type="term" value="C:SCF ubiquitin ligase complex"/>
    <property type="evidence" value="ECO:0000318"/>
    <property type="project" value="GO_Central"/>
</dbReference>
<dbReference type="GO" id="GO:0061575">
    <property type="term" value="F:cyclin-dependent protein serine/threonine kinase activator activity"/>
    <property type="evidence" value="ECO:0000318"/>
    <property type="project" value="GO_Central"/>
</dbReference>
<dbReference type="GO" id="GO:0042393">
    <property type="term" value="F:histone binding"/>
    <property type="evidence" value="ECO:0000318"/>
    <property type="project" value="GO_Central"/>
</dbReference>
<dbReference type="GO" id="GO:0019901">
    <property type="term" value="F:protein kinase binding"/>
    <property type="evidence" value="ECO:0000318"/>
    <property type="project" value="GO_Central"/>
</dbReference>
<dbReference type="GO" id="GO:0043130">
    <property type="term" value="F:ubiquitin binding"/>
    <property type="evidence" value="ECO:0000318"/>
    <property type="project" value="GO_Central"/>
</dbReference>
<dbReference type="GO" id="GO:0051301">
    <property type="term" value="P:cell division"/>
    <property type="evidence" value="ECO:0007669"/>
    <property type="project" value="UniProtKB-KW"/>
</dbReference>
<dbReference type="GO" id="GO:0048144">
    <property type="term" value="P:fibroblast proliferation"/>
    <property type="evidence" value="ECO:0007669"/>
    <property type="project" value="Ensembl"/>
</dbReference>
<dbReference type="GO" id="GO:0044772">
    <property type="term" value="P:mitotic cell cycle phase transition"/>
    <property type="evidence" value="ECO:0007669"/>
    <property type="project" value="Ensembl"/>
</dbReference>
<dbReference type="GO" id="GO:0006355">
    <property type="term" value="P:regulation of DNA-templated transcription"/>
    <property type="evidence" value="ECO:0007669"/>
    <property type="project" value="Ensembl"/>
</dbReference>
<dbReference type="GO" id="GO:0007346">
    <property type="term" value="P:regulation of mitotic cell cycle"/>
    <property type="evidence" value="ECO:0000318"/>
    <property type="project" value="GO_Central"/>
</dbReference>
<dbReference type="FunFam" id="3.30.170.10:FF:000001">
    <property type="entry name" value="Cyclin-dependent kinases regulatory subunit"/>
    <property type="match status" value="1"/>
</dbReference>
<dbReference type="Gene3D" id="3.30.170.10">
    <property type="entry name" value="Cyclin-dependent kinase, regulatory subunit"/>
    <property type="match status" value="1"/>
</dbReference>
<dbReference type="InterPro" id="IPR000789">
    <property type="entry name" value="Cyclin-dep_kinase_reg-sub"/>
</dbReference>
<dbReference type="InterPro" id="IPR036858">
    <property type="entry name" value="Cyclin-dep_kinase_reg-sub_sf"/>
</dbReference>
<dbReference type="PANTHER" id="PTHR23415">
    <property type="entry name" value="CYCLIN-DEPENDENT KINASES REGULATORY SUBUNIT/60S RIBOSOME SUBUNIT BIOGENESIS PROTEIN NIP7"/>
    <property type="match status" value="1"/>
</dbReference>
<dbReference type="Pfam" id="PF01111">
    <property type="entry name" value="CKS"/>
    <property type="match status" value="1"/>
</dbReference>
<dbReference type="PRINTS" id="PR00296">
    <property type="entry name" value="CYCLINKINASE"/>
</dbReference>
<dbReference type="SMART" id="SM01084">
    <property type="entry name" value="CKS"/>
    <property type="match status" value="1"/>
</dbReference>
<dbReference type="SUPFAM" id="SSF55637">
    <property type="entry name" value="Cell cycle regulatory proteins"/>
    <property type="match status" value="1"/>
</dbReference>
<dbReference type="PROSITE" id="PS00944">
    <property type="entry name" value="CKS_1"/>
    <property type="match status" value="1"/>
</dbReference>
<dbReference type="PROSITE" id="PS00945">
    <property type="entry name" value="CKS_2"/>
    <property type="match status" value="1"/>
</dbReference>
<protein>
    <recommendedName>
        <fullName>Cyclin-dependent kinases regulatory subunit 1</fullName>
        <shortName>CKS-1</shortName>
    </recommendedName>
</protein>
<organism>
    <name type="scientific">Bos taurus</name>
    <name type="common">Bovine</name>
    <dbReference type="NCBI Taxonomy" id="9913"/>
    <lineage>
        <taxon>Eukaryota</taxon>
        <taxon>Metazoa</taxon>
        <taxon>Chordata</taxon>
        <taxon>Craniata</taxon>
        <taxon>Vertebrata</taxon>
        <taxon>Euteleostomi</taxon>
        <taxon>Mammalia</taxon>
        <taxon>Eutheria</taxon>
        <taxon>Laurasiatheria</taxon>
        <taxon>Artiodactyla</taxon>
        <taxon>Ruminantia</taxon>
        <taxon>Pecora</taxon>
        <taxon>Bovidae</taxon>
        <taxon>Bovinae</taxon>
        <taxon>Bos</taxon>
    </lineage>
</organism>
<feature type="initiator methionine" description="Removed" evidence="2">
    <location>
        <position position="1"/>
    </location>
</feature>
<feature type="chain" id="PRO_0000260446" description="Cyclin-dependent kinases regulatory subunit 1">
    <location>
        <begin position="2"/>
        <end position="79"/>
    </location>
</feature>
<feature type="modified residue" description="N-acetylserine" evidence="2">
    <location>
        <position position="2"/>
    </location>
</feature>
<name>CKS1_BOVIN</name>
<sequence length="79" mass="9660">MSHKQIYYSDKYDDEEFEYRHVMLPKDIAKLVPKTHLMSESEWRNLGVQQSQGWVHYMIHEPEPHILLFRRPLPKKPKK</sequence>